<feature type="chain" id="PRO_1000068743" description="UPF0346 protein BPUM_1890">
    <location>
        <begin position="1"/>
        <end position="74"/>
    </location>
</feature>
<gene>
    <name type="ordered locus">BPUM_1890</name>
</gene>
<comment type="similarity">
    <text evidence="1">Belongs to the UPF0346 family.</text>
</comment>
<evidence type="ECO:0000255" key="1">
    <source>
        <dbReference type="HAMAP-Rule" id="MF_01538"/>
    </source>
</evidence>
<accession>A8FE93</accession>
<organism>
    <name type="scientific">Bacillus pumilus (strain SAFR-032)</name>
    <dbReference type="NCBI Taxonomy" id="315750"/>
    <lineage>
        <taxon>Bacteria</taxon>
        <taxon>Bacillati</taxon>
        <taxon>Bacillota</taxon>
        <taxon>Bacilli</taxon>
        <taxon>Bacillales</taxon>
        <taxon>Bacillaceae</taxon>
        <taxon>Bacillus</taxon>
    </lineage>
</organism>
<dbReference type="EMBL" id="CP000813">
    <property type="protein sequence ID" value="ABV62560.1"/>
    <property type="molecule type" value="Genomic_DNA"/>
</dbReference>
<dbReference type="RefSeq" id="WP_012010280.1">
    <property type="nucleotide sequence ID" value="NC_009848.4"/>
</dbReference>
<dbReference type="SMR" id="A8FE93"/>
<dbReference type="STRING" id="315750.BPUM_1890"/>
<dbReference type="GeneID" id="5621152"/>
<dbReference type="KEGG" id="bpu:BPUM_1890"/>
<dbReference type="eggNOG" id="COG4479">
    <property type="taxonomic scope" value="Bacteria"/>
</dbReference>
<dbReference type="HOGENOM" id="CLU_177534_1_0_9"/>
<dbReference type="OrthoDB" id="2242851at2"/>
<dbReference type="Proteomes" id="UP000001355">
    <property type="component" value="Chromosome"/>
</dbReference>
<dbReference type="Gene3D" id="1.10.150.260">
    <property type="entry name" value="YozE SAM-like"/>
    <property type="match status" value="1"/>
</dbReference>
<dbReference type="HAMAP" id="MF_01538">
    <property type="entry name" value="UPF0346"/>
    <property type="match status" value="1"/>
</dbReference>
<dbReference type="InterPro" id="IPR010673">
    <property type="entry name" value="UPF0346"/>
</dbReference>
<dbReference type="InterPro" id="IPR023089">
    <property type="entry name" value="YozE_SAM-like"/>
</dbReference>
<dbReference type="InterPro" id="IPR036806">
    <property type="entry name" value="YozE_SAM-like_sf"/>
</dbReference>
<dbReference type="NCBIfam" id="NF010193">
    <property type="entry name" value="PRK13672.1"/>
    <property type="match status" value="1"/>
</dbReference>
<dbReference type="Pfam" id="PF06855">
    <property type="entry name" value="YozE_SAM_like"/>
    <property type="match status" value="1"/>
</dbReference>
<dbReference type="PIRSF" id="PIRSF037262">
    <property type="entry name" value="UCP037262"/>
    <property type="match status" value="1"/>
</dbReference>
<dbReference type="SUPFAM" id="SSF140652">
    <property type="entry name" value="YozE-like"/>
    <property type="match status" value="1"/>
</dbReference>
<proteinExistence type="inferred from homology"/>
<name>Y1890_BACP2</name>
<sequence>MKSFYHYLMKYRHPKPKDEISHFANAAYEDHSFPKASTDYHELSVYLELNGDYLSSMTTFDEAFEQYDVEVKKK</sequence>
<reference key="1">
    <citation type="journal article" date="2007" name="PLoS ONE">
        <title>Paradoxical DNA repair and peroxide resistance gene conservation in Bacillus pumilus SAFR-032.</title>
        <authorList>
            <person name="Gioia J."/>
            <person name="Yerrapragada S."/>
            <person name="Qin X."/>
            <person name="Jiang H."/>
            <person name="Igboeli O.C."/>
            <person name="Muzny D."/>
            <person name="Dugan-Rocha S."/>
            <person name="Ding Y."/>
            <person name="Hawes A."/>
            <person name="Liu W."/>
            <person name="Perez L."/>
            <person name="Kovar C."/>
            <person name="Dinh H."/>
            <person name="Lee S."/>
            <person name="Nazareth L."/>
            <person name="Blyth P."/>
            <person name="Holder M."/>
            <person name="Buhay C."/>
            <person name="Tirumalai M.R."/>
            <person name="Liu Y."/>
            <person name="Dasgupta I."/>
            <person name="Bokhetache L."/>
            <person name="Fujita M."/>
            <person name="Karouia F."/>
            <person name="Eswara Moorthy P."/>
            <person name="Siefert J."/>
            <person name="Uzman A."/>
            <person name="Buzumbo P."/>
            <person name="Verma A."/>
            <person name="Zwiya H."/>
            <person name="McWilliams B.D."/>
            <person name="Olowu A."/>
            <person name="Clinkenbeard K.D."/>
            <person name="Newcombe D."/>
            <person name="Golebiewski L."/>
            <person name="Petrosino J.F."/>
            <person name="Nicholson W.L."/>
            <person name="Fox G.E."/>
            <person name="Venkateswaran K."/>
            <person name="Highlander S.K."/>
            <person name="Weinstock G.M."/>
        </authorList>
    </citation>
    <scope>NUCLEOTIDE SEQUENCE [LARGE SCALE GENOMIC DNA]</scope>
    <source>
        <strain>SAFR-032</strain>
    </source>
</reference>
<protein>
    <recommendedName>
        <fullName evidence="1">UPF0346 protein BPUM_1890</fullName>
    </recommendedName>
</protein>